<protein>
    <recommendedName>
        <fullName evidence="6">E3 ubiquitin-protein ligase KCMF1</fullName>
        <ecNumber evidence="1">2.3.2.27</ecNumber>
    </recommendedName>
</protein>
<feature type="initiator methionine" description="Removed" evidence="1">
    <location>
        <position position="1"/>
    </location>
</feature>
<feature type="chain" id="PRO_0000349218" description="E3 ubiquitin-protein ligase KCMF1">
    <location>
        <begin position="2"/>
        <end position="381"/>
    </location>
</feature>
<feature type="zinc finger region" description="ZZ-type" evidence="4">
    <location>
        <begin position="4"/>
        <end position="60"/>
    </location>
</feature>
<feature type="zinc finger region" description="C2H2-type" evidence="3">
    <location>
        <begin position="78"/>
        <end position="101"/>
    </location>
</feature>
<feature type="region of interest" description="Disordered" evidence="5">
    <location>
        <begin position="154"/>
        <end position="193"/>
    </location>
</feature>
<feature type="region of interest" description="Disordered" evidence="5">
    <location>
        <begin position="250"/>
        <end position="314"/>
    </location>
</feature>
<feature type="region of interest" description="Disordered" evidence="5">
    <location>
        <begin position="329"/>
        <end position="348"/>
    </location>
</feature>
<feature type="coiled-coil region" evidence="2">
    <location>
        <begin position="224"/>
        <end position="257"/>
    </location>
</feature>
<feature type="compositionally biased region" description="Low complexity" evidence="5">
    <location>
        <begin position="175"/>
        <end position="191"/>
    </location>
</feature>
<feature type="compositionally biased region" description="Low complexity" evidence="5">
    <location>
        <begin position="250"/>
        <end position="285"/>
    </location>
</feature>
<feature type="compositionally biased region" description="Basic and acidic residues" evidence="5">
    <location>
        <begin position="297"/>
        <end position="314"/>
    </location>
</feature>
<feature type="binding site" evidence="4">
    <location>
        <position position="9"/>
    </location>
    <ligand>
        <name>Zn(2+)</name>
        <dbReference type="ChEBI" id="CHEBI:29105"/>
        <label>1</label>
    </ligand>
</feature>
<feature type="binding site" evidence="4">
    <location>
        <position position="12"/>
    </location>
    <ligand>
        <name>Zn(2+)</name>
        <dbReference type="ChEBI" id="CHEBI:29105"/>
        <label>1</label>
    </ligand>
</feature>
<feature type="binding site" evidence="4">
    <location>
        <position position="24"/>
    </location>
    <ligand>
        <name>Zn(2+)</name>
        <dbReference type="ChEBI" id="CHEBI:29105"/>
        <label>2</label>
    </ligand>
</feature>
<feature type="binding site" evidence="4">
    <location>
        <position position="27"/>
    </location>
    <ligand>
        <name>Zn(2+)</name>
        <dbReference type="ChEBI" id="CHEBI:29105"/>
        <label>2</label>
    </ligand>
</feature>
<feature type="binding site" evidence="4">
    <location>
        <position position="33"/>
    </location>
    <ligand>
        <name>Zn(2+)</name>
        <dbReference type="ChEBI" id="CHEBI:29105"/>
        <label>1</label>
    </ligand>
</feature>
<feature type="binding site" evidence="4">
    <location>
        <position position="36"/>
    </location>
    <ligand>
        <name>Zn(2+)</name>
        <dbReference type="ChEBI" id="CHEBI:29105"/>
        <label>1</label>
    </ligand>
</feature>
<feature type="binding site" evidence="4">
    <location>
        <position position="46"/>
    </location>
    <ligand>
        <name>Zn(2+)</name>
        <dbReference type="ChEBI" id="CHEBI:29105"/>
        <label>2</label>
    </ligand>
</feature>
<feature type="binding site" evidence="4">
    <location>
        <position position="50"/>
    </location>
    <ligand>
        <name>Zn(2+)</name>
        <dbReference type="ChEBI" id="CHEBI:29105"/>
        <label>2</label>
    </ligand>
</feature>
<feature type="modified residue" description="N-acetylserine" evidence="1">
    <location>
        <position position="2"/>
    </location>
</feature>
<feature type="modified residue" description="Phosphoserine" evidence="1">
    <location>
        <position position="2"/>
    </location>
</feature>
<feature type="modified residue" description="Phosphoserine" evidence="1">
    <location>
        <position position="169"/>
    </location>
</feature>
<feature type="modified residue" description="Phosphoserine" evidence="1">
    <location>
        <position position="189"/>
    </location>
</feature>
<feature type="modified residue" description="Phosphoserine" evidence="1">
    <location>
        <position position="212"/>
    </location>
</feature>
<feature type="modified residue" description="Phosphoserine" evidence="1">
    <location>
        <position position="335"/>
    </location>
</feature>
<feature type="modified residue" description="Phosphoserine" evidence="1">
    <location>
        <position position="336"/>
    </location>
</feature>
<evidence type="ECO:0000250" key="1">
    <source>
        <dbReference type="UniProtKB" id="Q9P0J7"/>
    </source>
</evidence>
<evidence type="ECO:0000255" key="2"/>
<evidence type="ECO:0000255" key="3">
    <source>
        <dbReference type="PROSITE-ProRule" id="PRU00042"/>
    </source>
</evidence>
<evidence type="ECO:0000255" key="4">
    <source>
        <dbReference type="PROSITE-ProRule" id="PRU00228"/>
    </source>
</evidence>
<evidence type="ECO:0000256" key="5">
    <source>
        <dbReference type="SAM" id="MobiDB-lite"/>
    </source>
</evidence>
<evidence type="ECO:0000305" key="6"/>
<dbReference type="EC" id="2.3.2.27" evidence="1"/>
<dbReference type="EMBL" id="BC116058">
    <property type="protein sequence ID" value="AAI16059.1"/>
    <property type="molecule type" value="mRNA"/>
</dbReference>
<dbReference type="RefSeq" id="NP_001069743.1">
    <property type="nucleotide sequence ID" value="NM_001076275.1"/>
</dbReference>
<dbReference type="SMR" id="Q1LZE1"/>
<dbReference type="FunCoup" id="Q1LZE1">
    <property type="interactions" value="1473"/>
</dbReference>
<dbReference type="STRING" id="9913.ENSBTAP00000051183"/>
<dbReference type="PaxDb" id="9913-ENSBTAP00000051183"/>
<dbReference type="GeneID" id="613522"/>
<dbReference type="KEGG" id="bta:613522"/>
<dbReference type="CTD" id="56888"/>
<dbReference type="eggNOG" id="KOG1280">
    <property type="taxonomic scope" value="Eukaryota"/>
</dbReference>
<dbReference type="InParanoid" id="Q1LZE1"/>
<dbReference type="OrthoDB" id="7873042at2759"/>
<dbReference type="UniPathway" id="UPA00143"/>
<dbReference type="Proteomes" id="UP000009136">
    <property type="component" value="Unplaced"/>
</dbReference>
<dbReference type="GO" id="GO:0005770">
    <property type="term" value="C:late endosome"/>
    <property type="evidence" value="ECO:0007669"/>
    <property type="project" value="UniProtKB-SubCell"/>
</dbReference>
<dbReference type="GO" id="GO:0005764">
    <property type="term" value="C:lysosome"/>
    <property type="evidence" value="ECO:0007669"/>
    <property type="project" value="UniProtKB-SubCell"/>
</dbReference>
<dbReference type="GO" id="GO:0005886">
    <property type="term" value="C:plasma membrane"/>
    <property type="evidence" value="ECO:0000318"/>
    <property type="project" value="GO_Central"/>
</dbReference>
<dbReference type="GO" id="GO:0045202">
    <property type="term" value="C:synapse"/>
    <property type="evidence" value="ECO:0007669"/>
    <property type="project" value="GOC"/>
</dbReference>
<dbReference type="GO" id="GO:0016740">
    <property type="term" value="F:transferase activity"/>
    <property type="evidence" value="ECO:0007669"/>
    <property type="project" value="UniProtKB-KW"/>
</dbReference>
<dbReference type="GO" id="GO:0008270">
    <property type="term" value="F:zinc ion binding"/>
    <property type="evidence" value="ECO:0007669"/>
    <property type="project" value="UniProtKB-KW"/>
</dbReference>
<dbReference type="GO" id="GO:0141191">
    <property type="term" value="P:negative regulation of HRI-mediated signaling"/>
    <property type="evidence" value="ECO:0000250"/>
    <property type="project" value="UniProtKB"/>
</dbReference>
<dbReference type="GO" id="GO:0070534">
    <property type="term" value="P:protein K63-linked ubiquitination"/>
    <property type="evidence" value="ECO:0000250"/>
    <property type="project" value="UniProtKB"/>
</dbReference>
<dbReference type="GO" id="GO:0099536">
    <property type="term" value="P:synaptic signaling"/>
    <property type="evidence" value="ECO:0000318"/>
    <property type="project" value="GO_Central"/>
</dbReference>
<dbReference type="CDD" id="cd02338">
    <property type="entry name" value="ZZ_PCMF_like"/>
    <property type="match status" value="1"/>
</dbReference>
<dbReference type="FunFam" id="3.30.60.90:FF:000017">
    <property type="entry name" value="E3 ubiquitin-protein ligase KCMF1"/>
    <property type="match status" value="1"/>
</dbReference>
<dbReference type="Gene3D" id="3.30.60.90">
    <property type="match status" value="1"/>
</dbReference>
<dbReference type="InterPro" id="IPR008598">
    <property type="entry name" value="Di19_Zn-bd"/>
</dbReference>
<dbReference type="InterPro" id="IPR050774">
    <property type="entry name" value="KCMF1/Dystrophin"/>
</dbReference>
<dbReference type="InterPro" id="IPR013087">
    <property type="entry name" value="Znf_C2H2_type"/>
</dbReference>
<dbReference type="InterPro" id="IPR000433">
    <property type="entry name" value="Znf_ZZ"/>
</dbReference>
<dbReference type="InterPro" id="IPR043145">
    <property type="entry name" value="Znf_ZZ_sf"/>
</dbReference>
<dbReference type="PANTHER" id="PTHR12268">
    <property type="entry name" value="E3 UBIQUITIN-PROTEIN LIGASE KCMF1"/>
    <property type="match status" value="1"/>
</dbReference>
<dbReference type="PANTHER" id="PTHR12268:SF13">
    <property type="entry name" value="E3 UBIQUITIN-PROTEIN LIGASE KCMF1"/>
    <property type="match status" value="1"/>
</dbReference>
<dbReference type="Pfam" id="PF05605">
    <property type="entry name" value="zf-Di19"/>
    <property type="match status" value="1"/>
</dbReference>
<dbReference type="Pfam" id="PF00569">
    <property type="entry name" value="ZZ"/>
    <property type="match status" value="1"/>
</dbReference>
<dbReference type="SMART" id="SM00355">
    <property type="entry name" value="ZnF_C2H2"/>
    <property type="match status" value="1"/>
</dbReference>
<dbReference type="SMART" id="SM00291">
    <property type="entry name" value="ZnF_ZZ"/>
    <property type="match status" value="1"/>
</dbReference>
<dbReference type="SUPFAM" id="SSF57850">
    <property type="entry name" value="RING/U-box"/>
    <property type="match status" value="1"/>
</dbReference>
<dbReference type="PROSITE" id="PS01357">
    <property type="entry name" value="ZF_ZZ_1"/>
    <property type="match status" value="1"/>
</dbReference>
<dbReference type="PROSITE" id="PS50135">
    <property type="entry name" value="ZF_ZZ_2"/>
    <property type="match status" value="1"/>
</dbReference>
<dbReference type="PROSITE" id="PS50157">
    <property type="entry name" value="ZINC_FINGER_C2H2_2"/>
    <property type="match status" value="1"/>
</dbReference>
<name>KCMF1_BOVIN</name>
<accession>Q1LZE1</accession>
<keyword id="KW-0007">Acetylation</keyword>
<keyword id="KW-0175">Coiled coil</keyword>
<keyword id="KW-0963">Cytoplasm</keyword>
<keyword id="KW-0967">Endosome</keyword>
<keyword id="KW-0458">Lysosome</keyword>
<keyword id="KW-0479">Metal-binding</keyword>
<keyword id="KW-0597">Phosphoprotein</keyword>
<keyword id="KW-1185">Reference proteome</keyword>
<keyword id="KW-0808">Transferase</keyword>
<keyword id="KW-0833">Ubl conjugation pathway</keyword>
<keyword id="KW-0862">Zinc</keyword>
<keyword id="KW-0863">Zinc-finger</keyword>
<organism>
    <name type="scientific">Bos taurus</name>
    <name type="common">Bovine</name>
    <dbReference type="NCBI Taxonomy" id="9913"/>
    <lineage>
        <taxon>Eukaryota</taxon>
        <taxon>Metazoa</taxon>
        <taxon>Chordata</taxon>
        <taxon>Craniata</taxon>
        <taxon>Vertebrata</taxon>
        <taxon>Euteleostomi</taxon>
        <taxon>Mammalia</taxon>
        <taxon>Eutheria</taxon>
        <taxon>Laurasiatheria</taxon>
        <taxon>Artiodactyla</taxon>
        <taxon>Ruminantia</taxon>
        <taxon>Pecora</taxon>
        <taxon>Bovidae</taxon>
        <taxon>Bovinae</taxon>
        <taxon>Bos</taxon>
    </lineage>
</organism>
<gene>
    <name type="primary">KCMF1</name>
</gene>
<reference key="1">
    <citation type="submission" date="2006-05" db="EMBL/GenBank/DDBJ databases">
        <authorList>
            <consortium name="NIH - Mammalian Gene Collection (MGC) project"/>
        </authorList>
    </citation>
    <scope>NUCLEOTIDE SEQUENCE [LARGE SCALE MRNA]</scope>
    <source>
        <strain>Hereford</strain>
        <tissue>Ascending colon</tissue>
    </source>
</reference>
<sequence length="381" mass="41947">MSRHEGVSCDACLKGNFRGRRYKCLICYDYDLCASCYESGATTTRHTTDHPMQCILTRVDFDLYYGGEAFSVEQPQSFTCPYCGKMGYTETSLQEHVTSEHAETSTEVICPICAALPGGDPNHVTDDFAAHLTLEHRAPRDLDESSGVRHVRRMFHPGRGLGGPRARRSNMHFTSSSTGGLSSSQSSYSPSNREAMDPIAELLSQLSGVRRSAGGQLNSSGPSASQLQQLQMQLQLERQHAQAARQQLETARNATRRTNTSSVTTTITQSTATTNTANTESSQQTIQNSQFLLTRLNDPKMSETERQSMESERADRSLFVQELLLSTLVREESSSSDEDERGEMADFGAMGCVDIMPLDVALENLNLKESNKGNEPPPPPL</sequence>
<comment type="function">
    <text evidence="1">E3 ubiquitin-protein ligase which accepts ubiquitin from an E2 ubiquitin-conjugating enzyme and then transfers it to targeted substrates, promoting their degradation by the proteasome. Together with UBR4, component of the N-end rule pathway: ubiquitinates proteins bearing specific N-terminal residues that are destabilizing according to the N-end rule, leading to their degradation. Does not ubiquitinate proteins that are acetylated at the N-terminus. Together with UBR4, part of a protein quality control pathway that catalyzes ubiquitination and degradation of proteins that have been oxidized in response to reactive oxygen species (ROS): recognizes proteins with an Arg-CysO3(H) degron at the N-terminus, and mediates assembly of heterotypic 'Lys-63'-/'Lys-27'-linked branched ubiquitin chains on oxidized proteins, leading to their degradation by autophagy. Catalytic component of the SIFI complex, a multiprotein complex required to inhibit the mitochondrial stress response after a specific stress event has been resolved: ubiquitinates and degrades (1) components of the HRI-mediated signaling of the integrated stress response, such as DELE1 and EIF2AK1/HRI, as well as (2) unimported mitochondrial precursors. Within the SIFI complex, UBR4 initiates ubiquitin chain that are further elongated or branched by KCMF1.</text>
</comment>
<comment type="catalytic activity">
    <reaction evidence="1">
        <text>S-ubiquitinyl-[E2 ubiquitin-conjugating enzyme]-L-cysteine + [acceptor protein]-L-lysine = [E2 ubiquitin-conjugating enzyme]-L-cysteine + N(6)-ubiquitinyl-[acceptor protein]-L-lysine.</text>
        <dbReference type="EC" id="2.3.2.27"/>
    </reaction>
</comment>
<comment type="pathway">
    <text evidence="1">Protein modification; protein ubiquitination.</text>
</comment>
<comment type="subunit">
    <text evidence="1">Component of the SIFI complex, composed of KCMF1, UBR4 and calmodulin (CALM1, CALM2 or CALM3).</text>
</comment>
<comment type="subcellular location">
    <subcellularLocation>
        <location evidence="1">Cytoplasm</location>
    </subcellularLocation>
    <subcellularLocation>
        <location evidence="1">Late endosome</location>
    </subcellularLocation>
    <subcellularLocation>
        <location evidence="1">Lysosome</location>
    </subcellularLocation>
</comment>
<comment type="similarity">
    <text evidence="6">Belongs to the KCMF1 family.</text>
</comment>
<proteinExistence type="evidence at transcript level"/>